<proteinExistence type="inferred from homology"/>
<sequence>MAKKITFNEDARRGLERGLNTLADTVKVTLGPRGRNVVLEKKWGAPVITNDGVTIAKEIELDDPYEKIGAELVKEVAKKTDDVAGDGTTTSVVLAQAMVREGLKNVAAGADPISLRRGIEKSVAAVSKALLTSAKEVETEAEIAACASISAGDPQIGDIIAQALEKVGKEGVVTVEESNTFGTELEITEGMRFDKGYLSAYFVTDAERQETVFENPYILICDSKISSVKDLLPVVDKVIQSGKQLLIIAEDVDGEALATLVVNKIRGIFKSVAVKAPGFGDRRKMMLQDIAVLTGGQVISEEVGLKLENATLDLLGRARKVVVSKDETTIVDGAGSSDQIAGRVSQIRKELENSDSDYDREKLQERLAKLSGGVAVIRSGAATEVELKERKHRIEDAVRNAKAAVEEGIVAGGGAALLQSGTSALKDLQLTSEEAVGRNIVRSAIEAPLRQISLNAGLEPGVVVGKVSSLPQGHGLDASTGEYVDMLSRGISDPVKVTRSALENAASIAGLFLTTEAVVAEKPEPKPAPGPADPGAGMDF</sequence>
<dbReference type="EC" id="5.6.1.7" evidence="1"/>
<dbReference type="EMBL" id="AE014184">
    <property type="protein sequence ID" value="AAO44538.1"/>
    <property type="molecule type" value="Genomic_DNA"/>
</dbReference>
<dbReference type="RefSeq" id="WP_011102574.1">
    <property type="nucleotide sequence ID" value="NC_004572.3"/>
</dbReference>
<dbReference type="SMR" id="P69205"/>
<dbReference type="STRING" id="203267.TWT_441"/>
<dbReference type="KEGG" id="twh:TWT_441"/>
<dbReference type="eggNOG" id="COG0459">
    <property type="taxonomic scope" value="Bacteria"/>
</dbReference>
<dbReference type="HOGENOM" id="CLU_016503_3_0_11"/>
<dbReference type="OrthoDB" id="9766614at2"/>
<dbReference type="Proteomes" id="UP000002200">
    <property type="component" value="Chromosome"/>
</dbReference>
<dbReference type="GO" id="GO:0005737">
    <property type="term" value="C:cytoplasm"/>
    <property type="evidence" value="ECO:0007669"/>
    <property type="project" value="UniProtKB-SubCell"/>
</dbReference>
<dbReference type="GO" id="GO:0005524">
    <property type="term" value="F:ATP binding"/>
    <property type="evidence" value="ECO:0007669"/>
    <property type="project" value="UniProtKB-UniRule"/>
</dbReference>
<dbReference type="GO" id="GO:0140662">
    <property type="term" value="F:ATP-dependent protein folding chaperone"/>
    <property type="evidence" value="ECO:0007669"/>
    <property type="project" value="InterPro"/>
</dbReference>
<dbReference type="GO" id="GO:0016853">
    <property type="term" value="F:isomerase activity"/>
    <property type="evidence" value="ECO:0007669"/>
    <property type="project" value="UniProtKB-KW"/>
</dbReference>
<dbReference type="GO" id="GO:0051082">
    <property type="term" value="F:unfolded protein binding"/>
    <property type="evidence" value="ECO:0007669"/>
    <property type="project" value="UniProtKB-UniRule"/>
</dbReference>
<dbReference type="GO" id="GO:0042026">
    <property type="term" value="P:protein refolding"/>
    <property type="evidence" value="ECO:0007669"/>
    <property type="project" value="UniProtKB-UniRule"/>
</dbReference>
<dbReference type="CDD" id="cd03344">
    <property type="entry name" value="GroEL"/>
    <property type="match status" value="1"/>
</dbReference>
<dbReference type="FunFam" id="3.50.7.10:FF:000001">
    <property type="entry name" value="60 kDa chaperonin"/>
    <property type="match status" value="1"/>
</dbReference>
<dbReference type="Gene3D" id="3.50.7.10">
    <property type="entry name" value="GroEL"/>
    <property type="match status" value="1"/>
</dbReference>
<dbReference type="Gene3D" id="1.10.560.10">
    <property type="entry name" value="GroEL-like equatorial domain"/>
    <property type="match status" value="1"/>
</dbReference>
<dbReference type="Gene3D" id="3.30.260.10">
    <property type="entry name" value="TCP-1-like chaperonin intermediate domain"/>
    <property type="match status" value="1"/>
</dbReference>
<dbReference type="HAMAP" id="MF_00600">
    <property type="entry name" value="CH60"/>
    <property type="match status" value="1"/>
</dbReference>
<dbReference type="InterPro" id="IPR018370">
    <property type="entry name" value="Chaperonin_Cpn60_CS"/>
</dbReference>
<dbReference type="InterPro" id="IPR001844">
    <property type="entry name" value="Cpn60/GroEL"/>
</dbReference>
<dbReference type="InterPro" id="IPR002423">
    <property type="entry name" value="Cpn60/GroEL/TCP-1"/>
</dbReference>
<dbReference type="InterPro" id="IPR027409">
    <property type="entry name" value="GroEL-like_apical_dom_sf"/>
</dbReference>
<dbReference type="InterPro" id="IPR027413">
    <property type="entry name" value="GROEL-like_equatorial_sf"/>
</dbReference>
<dbReference type="InterPro" id="IPR027410">
    <property type="entry name" value="TCP-1-like_intermed_sf"/>
</dbReference>
<dbReference type="NCBIfam" id="TIGR02348">
    <property type="entry name" value="GroEL"/>
    <property type="match status" value="1"/>
</dbReference>
<dbReference type="NCBIfam" id="NF000592">
    <property type="entry name" value="PRK00013.1"/>
    <property type="match status" value="1"/>
</dbReference>
<dbReference type="NCBIfam" id="NF009487">
    <property type="entry name" value="PRK12849.1"/>
    <property type="match status" value="1"/>
</dbReference>
<dbReference type="NCBIfam" id="NF009488">
    <property type="entry name" value="PRK12850.1"/>
    <property type="match status" value="1"/>
</dbReference>
<dbReference type="NCBIfam" id="NF009489">
    <property type="entry name" value="PRK12851.1"/>
    <property type="match status" value="1"/>
</dbReference>
<dbReference type="PANTHER" id="PTHR45633">
    <property type="entry name" value="60 KDA HEAT SHOCK PROTEIN, MITOCHONDRIAL"/>
    <property type="match status" value="1"/>
</dbReference>
<dbReference type="Pfam" id="PF00118">
    <property type="entry name" value="Cpn60_TCP1"/>
    <property type="match status" value="1"/>
</dbReference>
<dbReference type="PRINTS" id="PR00298">
    <property type="entry name" value="CHAPERONIN60"/>
</dbReference>
<dbReference type="SUPFAM" id="SSF52029">
    <property type="entry name" value="GroEL apical domain-like"/>
    <property type="match status" value="1"/>
</dbReference>
<dbReference type="SUPFAM" id="SSF48592">
    <property type="entry name" value="GroEL equatorial domain-like"/>
    <property type="match status" value="1"/>
</dbReference>
<dbReference type="SUPFAM" id="SSF54849">
    <property type="entry name" value="GroEL-intermediate domain like"/>
    <property type="match status" value="1"/>
</dbReference>
<dbReference type="PROSITE" id="PS00296">
    <property type="entry name" value="CHAPERONINS_CPN60"/>
    <property type="match status" value="1"/>
</dbReference>
<gene>
    <name evidence="1" type="primary">groEL</name>
    <name evidence="1" type="synonym">groL</name>
    <name type="ordered locus">TWT_441</name>
</gene>
<organism>
    <name type="scientific">Tropheryma whipplei (strain Twist)</name>
    <name type="common">Whipple's bacillus</name>
    <dbReference type="NCBI Taxonomy" id="203267"/>
    <lineage>
        <taxon>Bacteria</taxon>
        <taxon>Bacillati</taxon>
        <taxon>Actinomycetota</taxon>
        <taxon>Actinomycetes</taxon>
        <taxon>Micrococcales</taxon>
        <taxon>Tropherymataceae</taxon>
        <taxon>Tropheryma</taxon>
    </lineage>
</organism>
<feature type="chain" id="PRO_0000063589" description="Chaperonin GroEL">
    <location>
        <begin position="1"/>
        <end position="540"/>
    </location>
</feature>
<feature type="region of interest" description="Disordered" evidence="2">
    <location>
        <begin position="520"/>
        <end position="540"/>
    </location>
</feature>
<feature type="binding site" evidence="1">
    <location>
        <begin position="29"/>
        <end position="32"/>
    </location>
    <ligand>
        <name>ATP</name>
        <dbReference type="ChEBI" id="CHEBI:30616"/>
    </ligand>
</feature>
<feature type="binding site" evidence="1">
    <location>
        <begin position="86"/>
        <end position="90"/>
    </location>
    <ligand>
        <name>ATP</name>
        <dbReference type="ChEBI" id="CHEBI:30616"/>
    </ligand>
</feature>
<feature type="binding site" evidence="1">
    <location>
        <position position="413"/>
    </location>
    <ligand>
        <name>ATP</name>
        <dbReference type="ChEBI" id="CHEBI:30616"/>
    </ligand>
</feature>
<feature type="binding site" evidence="1">
    <location>
        <position position="493"/>
    </location>
    <ligand>
        <name>ATP</name>
        <dbReference type="ChEBI" id="CHEBI:30616"/>
    </ligand>
</feature>
<protein>
    <recommendedName>
        <fullName evidence="1">Chaperonin GroEL</fullName>
        <ecNumber evidence="1">5.6.1.7</ecNumber>
    </recommendedName>
    <alternativeName>
        <fullName evidence="1">60 kDa chaperonin</fullName>
    </alternativeName>
    <alternativeName>
        <fullName evidence="1">Chaperonin-60</fullName>
        <shortName evidence="1">Cpn60</shortName>
    </alternativeName>
</protein>
<keyword id="KW-0067">ATP-binding</keyword>
<keyword id="KW-0143">Chaperone</keyword>
<keyword id="KW-0963">Cytoplasm</keyword>
<keyword id="KW-0413">Isomerase</keyword>
<keyword id="KW-0547">Nucleotide-binding</keyword>
<keyword id="KW-1185">Reference proteome</keyword>
<reference key="1">
    <citation type="journal article" date="2003" name="Genome Res.">
        <title>Tropheryma whipplei twist: a human pathogenic Actinobacteria with a reduced genome.</title>
        <authorList>
            <person name="Raoult D."/>
            <person name="Ogata H."/>
            <person name="Audic S."/>
            <person name="Robert C."/>
            <person name="Suhre K."/>
            <person name="Drancourt M."/>
            <person name="Claverie J.-M."/>
        </authorList>
    </citation>
    <scope>NUCLEOTIDE SEQUENCE [LARGE SCALE GENOMIC DNA]</scope>
    <source>
        <strain>Twist</strain>
    </source>
</reference>
<name>CH60_TROWT</name>
<comment type="function">
    <text evidence="1">Together with its co-chaperonin GroES, plays an essential role in assisting protein folding. The GroEL-GroES system forms a nano-cage that allows encapsulation of the non-native substrate proteins and provides a physical environment optimized to promote and accelerate protein folding.</text>
</comment>
<comment type="catalytic activity">
    <reaction evidence="1">
        <text>ATP + H2O + a folded polypeptide = ADP + phosphate + an unfolded polypeptide.</text>
        <dbReference type="EC" id="5.6.1.7"/>
    </reaction>
</comment>
<comment type="subunit">
    <text evidence="1">Forms a cylinder of 14 subunits composed of two heptameric rings stacked back-to-back. Interacts with the co-chaperonin GroES.</text>
</comment>
<comment type="subcellular location">
    <subcellularLocation>
        <location evidence="1">Cytoplasm</location>
    </subcellularLocation>
</comment>
<comment type="similarity">
    <text evidence="1">Belongs to the chaperonin (HSP60) family.</text>
</comment>
<accession>P69205</accession>
<accession>Q9KJC0</accession>
<evidence type="ECO:0000255" key="1">
    <source>
        <dbReference type="HAMAP-Rule" id="MF_00600"/>
    </source>
</evidence>
<evidence type="ECO:0000256" key="2">
    <source>
        <dbReference type="SAM" id="MobiDB-lite"/>
    </source>
</evidence>